<keyword id="KW-0143">Chaperone</keyword>
<keyword id="KW-0963">Cytoplasm</keyword>
<keyword id="KW-0235">DNA replication</keyword>
<keyword id="KW-0479">Metal-binding</keyword>
<keyword id="KW-1185">Reference proteome</keyword>
<keyword id="KW-0677">Repeat</keyword>
<keyword id="KW-0346">Stress response</keyword>
<keyword id="KW-0862">Zinc</keyword>
<keyword id="KW-0863">Zinc-finger</keyword>
<accession>A8EUC7</accession>
<gene>
    <name evidence="1" type="primary">dnaJ</name>
    <name type="ordered locus">Abu_1294</name>
</gene>
<name>DNAJ_ALIB4</name>
<evidence type="ECO:0000255" key="1">
    <source>
        <dbReference type="HAMAP-Rule" id="MF_01152"/>
    </source>
</evidence>
<proteinExistence type="inferred from homology"/>
<feature type="chain" id="PRO_1000085142" description="Chaperone protein DnaJ">
    <location>
        <begin position="1"/>
        <end position="372"/>
    </location>
</feature>
<feature type="domain" description="J" evidence="1">
    <location>
        <begin position="5"/>
        <end position="70"/>
    </location>
</feature>
<feature type="repeat" description="CXXCXGXG motif">
    <location>
        <begin position="147"/>
        <end position="154"/>
    </location>
</feature>
<feature type="repeat" description="CXXCXGXG motif">
    <location>
        <begin position="163"/>
        <end position="170"/>
    </location>
</feature>
<feature type="repeat" description="CXXCXGXG motif">
    <location>
        <begin position="185"/>
        <end position="192"/>
    </location>
</feature>
<feature type="repeat" description="CXXCXGXG motif">
    <location>
        <begin position="199"/>
        <end position="206"/>
    </location>
</feature>
<feature type="zinc finger region" description="CR-type" evidence="1">
    <location>
        <begin position="134"/>
        <end position="211"/>
    </location>
</feature>
<feature type="binding site" evidence="1">
    <location>
        <position position="147"/>
    </location>
    <ligand>
        <name>Zn(2+)</name>
        <dbReference type="ChEBI" id="CHEBI:29105"/>
        <label>1</label>
    </ligand>
</feature>
<feature type="binding site" evidence="1">
    <location>
        <position position="150"/>
    </location>
    <ligand>
        <name>Zn(2+)</name>
        <dbReference type="ChEBI" id="CHEBI:29105"/>
        <label>1</label>
    </ligand>
</feature>
<feature type="binding site" evidence="1">
    <location>
        <position position="163"/>
    </location>
    <ligand>
        <name>Zn(2+)</name>
        <dbReference type="ChEBI" id="CHEBI:29105"/>
        <label>2</label>
    </ligand>
</feature>
<feature type="binding site" evidence="1">
    <location>
        <position position="166"/>
    </location>
    <ligand>
        <name>Zn(2+)</name>
        <dbReference type="ChEBI" id="CHEBI:29105"/>
        <label>2</label>
    </ligand>
</feature>
<feature type="binding site" evidence="1">
    <location>
        <position position="185"/>
    </location>
    <ligand>
        <name>Zn(2+)</name>
        <dbReference type="ChEBI" id="CHEBI:29105"/>
        <label>2</label>
    </ligand>
</feature>
<feature type="binding site" evidence="1">
    <location>
        <position position="188"/>
    </location>
    <ligand>
        <name>Zn(2+)</name>
        <dbReference type="ChEBI" id="CHEBI:29105"/>
        <label>2</label>
    </ligand>
</feature>
<feature type="binding site" evidence="1">
    <location>
        <position position="199"/>
    </location>
    <ligand>
        <name>Zn(2+)</name>
        <dbReference type="ChEBI" id="CHEBI:29105"/>
        <label>1</label>
    </ligand>
</feature>
<feature type="binding site" evidence="1">
    <location>
        <position position="202"/>
    </location>
    <ligand>
        <name>Zn(2+)</name>
        <dbReference type="ChEBI" id="CHEBI:29105"/>
        <label>1</label>
    </ligand>
</feature>
<reference key="1">
    <citation type="journal article" date="2007" name="PLoS ONE">
        <title>The complete genome sequence and analysis of the Epsilonproteobacterium Arcobacter butzleri.</title>
        <authorList>
            <person name="Miller W.G."/>
            <person name="Parker C.T."/>
            <person name="Rubenfield M."/>
            <person name="Mendz G.L."/>
            <person name="Woesten M.M.S.M."/>
            <person name="Ussery D.W."/>
            <person name="Stolz J.F."/>
            <person name="Binnewies T.T."/>
            <person name="Hallin P.F."/>
            <person name="Wang G."/>
            <person name="Malek J.A."/>
            <person name="Rogosin A."/>
            <person name="Stanker L.H."/>
            <person name="Mandrell R.E."/>
        </authorList>
    </citation>
    <scope>NUCLEOTIDE SEQUENCE [LARGE SCALE GENOMIC DNA]</scope>
    <source>
        <strain>RM4018</strain>
    </source>
</reference>
<dbReference type="EMBL" id="CP000361">
    <property type="protein sequence ID" value="ABV67551.1"/>
    <property type="molecule type" value="Genomic_DNA"/>
</dbReference>
<dbReference type="RefSeq" id="WP_012012965.1">
    <property type="nucleotide sequence ID" value="NC_009850.1"/>
</dbReference>
<dbReference type="SMR" id="A8EUC7"/>
<dbReference type="STRING" id="367737.Abu_1294"/>
<dbReference type="GeneID" id="24305296"/>
<dbReference type="KEGG" id="abu:Abu_1294"/>
<dbReference type="eggNOG" id="COG0484">
    <property type="taxonomic scope" value="Bacteria"/>
</dbReference>
<dbReference type="HOGENOM" id="CLU_017633_0_7_7"/>
<dbReference type="Proteomes" id="UP000001136">
    <property type="component" value="Chromosome"/>
</dbReference>
<dbReference type="GO" id="GO:0005737">
    <property type="term" value="C:cytoplasm"/>
    <property type="evidence" value="ECO:0007669"/>
    <property type="project" value="UniProtKB-SubCell"/>
</dbReference>
<dbReference type="GO" id="GO:0005524">
    <property type="term" value="F:ATP binding"/>
    <property type="evidence" value="ECO:0007669"/>
    <property type="project" value="InterPro"/>
</dbReference>
<dbReference type="GO" id="GO:0031072">
    <property type="term" value="F:heat shock protein binding"/>
    <property type="evidence" value="ECO:0007669"/>
    <property type="project" value="InterPro"/>
</dbReference>
<dbReference type="GO" id="GO:0051082">
    <property type="term" value="F:unfolded protein binding"/>
    <property type="evidence" value="ECO:0007669"/>
    <property type="project" value="UniProtKB-UniRule"/>
</dbReference>
<dbReference type="GO" id="GO:0008270">
    <property type="term" value="F:zinc ion binding"/>
    <property type="evidence" value="ECO:0007669"/>
    <property type="project" value="UniProtKB-UniRule"/>
</dbReference>
<dbReference type="GO" id="GO:0051085">
    <property type="term" value="P:chaperone cofactor-dependent protein refolding"/>
    <property type="evidence" value="ECO:0007669"/>
    <property type="project" value="TreeGrafter"/>
</dbReference>
<dbReference type="GO" id="GO:0006260">
    <property type="term" value="P:DNA replication"/>
    <property type="evidence" value="ECO:0007669"/>
    <property type="project" value="UniProtKB-KW"/>
</dbReference>
<dbReference type="GO" id="GO:0042026">
    <property type="term" value="P:protein refolding"/>
    <property type="evidence" value="ECO:0007669"/>
    <property type="project" value="TreeGrafter"/>
</dbReference>
<dbReference type="GO" id="GO:0009408">
    <property type="term" value="P:response to heat"/>
    <property type="evidence" value="ECO:0007669"/>
    <property type="project" value="InterPro"/>
</dbReference>
<dbReference type="CDD" id="cd06257">
    <property type="entry name" value="DnaJ"/>
    <property type="match status" value="1"/>
</dbReference>
<dbReference type="CDD" id="cd10747">
    <property type="entry name" value="DnaJ_C"/>
    <property type="match status" value="1"/>
</dbReference>
<dbReference type="CDD" id="cd10719">
    <property type="entry name" value="DnaJ_zf"/>
    <property type="match status" value="1"/>
</dbReference>
<dbReference type="FunFam" id="1.10.287.110:FF:000034">
    <property type="entry name" value="Chaperone protein DnaJ"/>
    <property type="match status" value="1"/>
</dbReference>
<dbReference type="FunFam" id="2.60.260.20:FF:000005">
    <property type="entry name" value="Chaperone protein dnaJ 1, mitochondrial"/>
    <property type="match status" value="1"/>
</dbReference>
<dbReference type="FunFam" id="2.10.230.10:FF:000002">
    <property type="entry name" value="Molecular chaperone DnaJ"/>
    <property type="match status" value="1"/>
</dbReference>
<dbReference type="Gene3D" id="1.10.287.110">
    <property type="entry name" value="DnaJ domain"/>
    <property type="match status" value="1"/>
</dbReference>
<dbReference type="Gene3D" id="2.10.230.10">
    <property type="entry name" value="Heat shock protein DnaJ, cysteine-rich domain"/>
    <property type="match status" value="1"/>
</dbReference>
<dbReference type="Gene3D" id="2.60.260.20">
    <property type="entry name" value="Urease metallochaperone UreE, N-terminal domain"/>
    <property type="match status" value="2"/>
</dbReference>
<dbReference type="HAMAP" id="MF_01152">
    <property type="entry name" value="DnaJ"/>
    <property type="match status" value="1"/>
</dbReference>
<dbReference type="InterPro" id="IPR012724">
    <property type="entry name" value="DnaJ"/>
</dbReference>
<dbReference type="InterPro" id="IPR002939">
    <property type="entry name" value="DnaJ_C"/>
</dbReference>
<dbReference type="InterPro" id="IPR001623">
    <property type="entry name" value="DnaJ_domain"/>
</dbReference>
<dbReference type="InterPro" id="IPR018253">
    <property type="entry name" value="DnaJ_domain_CS"/>
</dbReference>
<dbReference type="InterPro" id="IPR008971">
    <property type="entry name" value="HSP40/DnaJ_pept-bd"/>
</dbReference>
<dbReference type="InterPro" id="IPR001305">
    <property type="entry name" value="HSP_DnaJ_Cys-rich_dom"/>
</dbReference>
<dbReference type="InterPro" id="IPR036410">
    <property type="entry name" value="HSP_DnaJ_Cys-rich_dom_sf"/>
</dbReference>
<dbReference type="InterPro" id="IPR036869">
    <property type="entry name" value="J_dom_sf"/>
</dbReference>
<dbReference type="NCBIfam" id="TIGR02349">
    <property type="entry name" value="DnaJ_bact"/>
    <property type="match status" value="1"/>
</dbReference>
<dbReference type="NCBIfam" id="NF008035">
    <property type="entry name" value="PRK10767.1"/>
    <property type="match status" value="1"/>
</dbReference>
<dbReference type="PANTHER" id="PTHR43096:SF48">
    <property type="entry name" value="CHAPERONE PROTEIN DNAJ"/>
    <property type="match status" value="1"/>
</dbReference>
<dbReference type="PANTHER" id="PTHR43096">
    <property type="entry name" value="DNAJ HOMOLOG 1, MITOCHONDRIAL-RELATED"/>
    <property type="match status" value="1"/>
</dbReference>
<dbReference type="Pfam" id="PF00226">
    <property type="entry name" value="DnaJ"/>
    <property type="match status" value="1"/>
</dbReference>
<dbReference type="Pfam" id="PF01556">
    <property type="entry name" value="DnaJ_C"/>
    <property type="match status" value="1"/>
</dbReference>
<dbReference type="Pfam" id="PF00684">
    <property type="entry name" value="DnaJ_CXXCXGXG"/>
    <property type="match status" value="1"/>
</dbReference>
<dbReference type="PRINTS" id="PR00625">
    <property type="entry name" value="JDOMAIN"/>
</dbReference>
<dbReference type="SMART" id="SM00271">
    <property type="entry name" value="DnaJ"/>
    <property type="match status" value="1"/>
</dbReference>
<dbReference type="SUPFAM" id="SSF46565">
    <property type="entry name" value="Chaperone J-domain"/>
    <property type="match status" value="1"/>
</dbReference>
<dbReference type="SUPFAM" id="SSF57938">
    <property type="entry name" value="DnaJ/Hsp40 cysteine-rich domain"/>
    <property type="match status" value="1"/>
</dbReference>
<dbReference type="SUPFAM" id="SSF49493">
    <property type="entry name" value="HSP40/DnaJ peptide-binding domain"/>
    <property type="match status" value="2"/>
</dbReference>
<dbReference type="PROSITE" id="PS00636">
    <property type="entry name" value="DNAJ_1"/>
    <property type="match status" value="1"/>
</dbReference>
<dbReference type="PROSITE" id="PS50076">
    <property type="entry name" value="DNAJ_2"/>
    <property type="match status" value="1"/>
</dbReference>
<dbReference type="PROSITE" id="PS51188">
    <property type="entry name" value="ZF_CR"/>
    <property type="match status" value="1"/>
</dbReference>
<sequence>MTEIDYYELLEISRNSDKSTIKKAYRQMAMKYHPDKNPGDNEAEEKFKAINEAYQVLSDDEKKSIYDRYGKAGLEGHGQRGGGFSGGFDDLGSIFEEMFGFGTSSRSRRERKTYNYNLDVTIEVKLEFNEAVFGCNKEINYKYKTACKPCEGTGAKDGKLSTCPTCKGQGQVHSRQGFMTFAQTCPRCGGTGQATTDSCKSCKGTGYEEVKDNFKVDIPEGVNDGMRIRVSNKGNIAPNGQRGDLYLQVSVKEDSHFVRHDDDIYFEAPIFFTQVALGGTIKVPSLRGELELEIPKGAKDKQQFTFKGEGVKSVQGYGKGDLIIQIKIEYPKALNNEQKELLEKLQDSFGIESKPHETTFEGMFDKVKKWFS</sequence>
<organism>
    <name type="scientific">Aliarcobacter butzleri (strain RM4018)</name>
    <name type="common">Arcobacter butzleri</name>
    <dbReference type="NCBI Taxonomy" id="367737"/>
    <lineage>
        <taxon>Bacteria</taxon>
        <taxon>Pseudomonadati</taxon>
        <taxon>Campylobacterota</taxon>
        <taxon>Epsilonproteobacteria</taxon>
        <taxon>Campylobacterales</taxon>
        <taxon>Arcobacteraceae</taxon>
        <taxon>Aliarcobacter</taxon>
    </lineage>
</organism>
<protein>
    <recommendedName>
        <fullName evidence="1">Chaperone protein DnaJ</fullName>
    </recommendedName>
</protein>
<comment type="function">
    <text evidence="1">Participates actively in the response to hyperosmotic and heat shock by preventing the aggregation of stress-denatured proteins and by disaggregating proteins, also in an autonomous, DnaK-independent fashion. Unfolded proteins bind initially to DnaJ; upon interaction with the DnaJ-bound protein, DnaK hydrolyzes its bound ATP, resulting in the formation of a stable complex. GrpE releases ADP from DnaK; ATP binding to DnaK triggers the release of the substrate protein, thus completing the reaction cycle. Several rounds of ATP-dependent interactions between DnaJ, DnaK and GrpE are required for fully efficient folding. Also involved, together with DnaK and GrpE, in the DNA replication of plasmids through activation of initiation proteins.</text>
</comment>
<comment type="cofactor">
    <cofactor evidence="1">
        <name>Zn(2+)</name>
        <dbReference type="ChEBI" id="CHEBI:29105"/>
    </cofactor>
    <text evidence="1">Binds 2 Zn(2+) ions per monomer.</text>
</comment>
<comment type="subunit">
    <text evidence="1">Homodimer.</text>
</comment>
<comment type="subcellular location">
    <subcellularLocation>
        <location evidence="1">Cytoplasm</location>
    </subcellularLocation>
</comment>
<comment type="domain">
    <text evidence="1">The J domain is necessary and sufficient to stimulate DnaK ATPase activity. Zinc center 1 plays an important role in the autonomous, DnaK-independent chaperone activity of DnaJ. Zinc center 2 is essential for interaction with DnaK and for DnaJ activity.</text>
</comment>
<comment type="similarity">
    <text evidence="1">Belongs to the DnaJ family.</text>
</comment>